<reference key="1">
    <citation type="submission" date="2000-01" db="EMBL/GenBank/DDBJ databases">
        <title>Ion channels in lens epithelia.</title>
        <authorList>
            <person name="Rae J.L."/>
        </authorList>
    </citation>
    <scope>NUCLEOTIDE SEQUENCE [MRNA] (ISOFORM 1)</scope>
    <source>
        <tissue>Lens epithelium</tissue>
    </source>
</reference>
<reference key="2">
    <citation type="journal article" date="2004" name="Nat. Genet.">
        <title>Complete sequencing and characterization of 21,243 full-length human cDNAs.</title>
        <authorList>
            <person name="Ota T."/>
            <person name="Suzuki Y."/>
            <person name="Nishikawa T."/>
            <person name="Otsuki T."/>
            <person name="Sugiyama T."/>
            <person name="Irie R."/>
            <person name="Wakamatsu A."/>
            <person name="Hayashi K."/>
            <person name="Sato H."/>
            <person name="Nagai K."/>
            <person name="Kimura K."/>
            <person name="Makita H."/>
            <person name="Sekine M."/>
            <person name="Obayashi M."/>
            <person name="Nishi T."/>
            <person name="Shibahara T."/>
            <person name="Tanaka T."/>
            <person name="Ishii S."/>
            <person name="Yamamoto J."/>
            <person name="Saito K."/>
            <person name="Kawai Y."/>
            <person name="Isono Y."/>
            <person name="Nakamura Y."/>
            <person name="Nagahari K."/>
            <person name="Murakami K."/>
            <person name="Yasuda T."/>
            <person name="Iwayanagi T."/>
            <person name="Wagatsuma M."/>
            <person name="Shiratori A."/>
            <person name="Sudo H."/>
            <person name="Hosoiri T."/>
            <person name="Kaku Y."/>
            <person name="Kodaira H."/>
            <person name="Kondo H."/>
            <person name="Sugawara M."/>
            <person name="Takahashi M."/>
            <person name="Kanda K."/>
            <person name="Yokoi T."/>
            <person name="Furuya T."/>
            <person name="Kikkawa E."/>
            <person name="Omura Y."/>
            <person name="Abe K."/>
            <person name="Kamihara K."/>
            <person name="Katsuta N."/>
            <person name="Sato K."/>
            <person name="Tanikawa M."/>
            <person name="Yamazaki M."/>
            <person name="Ninomiya K."/>
            <person name="Ishibashi T."/>
            <person name="Yamashita H."/>
            <person name="Murakawa K."/>
            <person name="Fujimori K."/>
            <person name="Tanai H."/>
            <person name="Kimata M."/>
            <person name="Watanabe M."/>
            <person name="Hiraoka S."/>
            <person name="Chiba Y."/>
            <person name="Ishida S."/>
            <person name="Ono Y."/>
            <person name="Takiguchi S."/>
            <person name="Watanabe S."/>
            <person name="Yosida M."/>
            <person name="Hotuta T."/>
            <person name="Kusano J."/>
            <person name="Kanehori K."/>
            <person name="Takahashi-Fujii A."/>
            <person name="Hara H."/>
            <person name="Tanase T.-O."/>
            <person name="Nomura Y."/>
            <person name="Togiya S."/>
            <person name="Komai F."/>
            <person name="Hara R."/>
            <person name="Takeuchi K."/>
            <person name="Arita M."/>
            <person name="Imose N."/>
            <person name="Musashino K."/>
            <person name="Yuuki H."/>
            <person name="Oshima A."/>
            <person name="Sasaki N."/>
            <person name="Aotsuka S."/>
            <person name="Yoshikawa Y."/>
            <person name="Matsunawa H."/>
            <person name="Ichihara T."/>
            <person name="Shiohata N."/>
            <person name="Sano S."/>
            <person name="Moriya S."/>
            <person name="Momiyama H."/>
            <person name="Satoh N."/>
            <person name="Takami S."/>
            <person name="Terashima Y."/>
            <person name="Suzuki O."/>
            <person name="Nakagawa S."/>
            <person name="Senoh A."/>
            <person name="Mizoguchi H."/>
            <person name="Goto Y."/>
            <person name="Shimizu F."/>
            <person name="Wakebe H."/>
            <person name="Hishigaki H."/>
            <person name="Watanabe T."/>
            <person name="Sugiyama A."/>
            <person name="Takemoto M."/>
            <person name="Kawakami B."/>
            <person name="Yamazaki M."/>
            <person name="Watanabe K."/>
            <person name="Kumagai A."/>
            <person name="Itakura S."/>
            <person name="Fukuzumi Y."/>
            <person name="Fujimori Y."/>
            <person name="Komiyama M."/>
            <person name="Tashiro H."/>
            <person name="Tanigami A."/>
            <person name="Fujiwara T."/>
            <person name="Ono T."/>
            <person name="Yamada K."/>
            <person name="Fujii Y."/>
            <person name="Ozaki K."/>
            <person name="Hirao M."/>
            <person name="Ohmori Y."/>
            <person name="Kawabata A."/>
            <person name="Hikiji T."/>
            <person name="Kobatake N."/>
            <person name="Inagaki H."/>
            <person name="Ikema Y."/>
            <person name="Okamoto S."/>
            <person name="Okitani R."/>
            <person name="Kawakami T."/>
            <person name="Noguchi S."/>
            <person name="Itoh T."/>
            <person name="Shigeta K."/>
            <person name="Senba T."/>
            <person name="Matsumura K."/>
            <person name="Nakajima Y."/>
            <person name="Mizuno T."/>
            <person name="Morinaga M."/>
            <person name="Sasaki M."/>
            <person name="Togashi T."/>
            <person name="Oyama M."/>
            <person name="Hata H."/>
            <person name="Watanabe M."/>
            <person name="Komatsu T."/>
            <person name="Mizushima-Sugano J."/>
            <person name="Satoh T."/>
            <person name="Shirai Y."/>
            <person name="Takahashi Y."/>
            <person name="Nakagawa K."/>
            <person name="Okumura K."/>
            <person name="Nagase T."/>
            <person name="Nomura N."/>
            <person name="Kikuchi H."/>
            <person name="Masuho Y."/>
            <person name="Yamashita R."/>
            <person name="Nakai K."/>
            <person name="Yada T."/>
            <person name="Nakamura Y."/>
            <person name="Ohara O."/>
            <person name="Isogai T."/>
            <person name="Sugano S."/>
        </authorList>
    </citation>
    <scope>NUCLEOTIDE SEQUENCE [LARGE SCALE MRNA] (ISOFORMS 1 AND 2)</scope>
    <source>
        <tissue>Brain</tissue>
        <tissue>Synovium</tissue>
    </source>
</reference>
<reference key="3">
    <citation type="journal article" date="2004" name="Nature">
        <title>The sequence and analysis of duplication-rich human chromosome 16.</title>
        <authorList>
            <person name="Martin J."/>
            <person name="Han C."/>
            <person name="Gordon L.A."/>
            <person name="Terry A."/>
            <person name="Prabhakar S."/>
            <person name="She X."/>
            <person name="Xie G."/>
            <person name="Hellsten U."/>
            <person name="Chan Y.M."/>
            <person name="Altherr M."/>
            <person name="Couronne O."/>
            <person name="Aerts A."/>
            <person name="Bajorek E."/>
            <person name="Black S."/>
            <person name="Blumer H."/>
            <person name="Branscomb E."/>
            <person name="Brown N.C."/>
            <person name="Bruno W.J."/>
            <person name="Buckingham J.M."/>
            <person name="Callen D.F."/>
            <person name="Campbell C.S."/>
            <person name="Campbell M.L."/>
            <person name="Campbell E.W."/>
            <person name="Caoile C."/>
            <person name="Challacombe J.F."/>
            <person name="Chasteen L.A."/>
            <person name="Chertkov O."/>
            <person name="Chi H.C."/>
            <person name="Christensen M."/>
            <person name="Clark L.M."/>
            <person name="Cohn J.D."/>
            <person name="Denys M."/>
            <person name="Detter J.C."/>
            <person name="Dickson M."/>
            <person name="Dimitrijevic-Bussod M."/>
            <person name="Escobar J."/>
            <person name="Fawcett J.J."/>
            <person name="Flowers D."/>
            <person name="Fotopulos D."/>
            <person name="Glavina T."/>
            <person name="Gomez M."/>
            <person name="Gonzales E."/>
            <person name="Goodstein D."/>
            <person name="Goodwin L.A."/>
            <person name="Grady D.L."/>
            <person name="Grigoriev I."/>
            <person name="Groza M."/>
            <person name="Hammon N."/>
            <person name="Hawkins T."/>
            <person name="Haydu L."/>
            <person name="Hildebrand C.E."/>
            <person name="Huang W."/>
            <person name="Israni S."/>
            <person name="Jett J."/>
            <person name="Jewett P.B."/>
            <person name="Kadner K."/>
            <person name="Kimball H."/>
            <person name="Kobayashi A."/>
            <person name="Krawczyk M.-C."/>
            <person name="Leyba T."/>
            <person name="Longmire J.L."/>
            <person name="Lopez F."/>
            <person name="Lou Y."/>
            <person name="Lowry S."/>
            <person name="Ludeman T."/>
            <person name="Manohar C.F."/>
            <person name="Mark G.A."/>
            <person name="McMurray K.L."/>
            <person name="Meincke L.J."/>
            <person name="Morgan J."/>
            <person name="Moyzis R.K."/>
            <person name="Mundt M.O."/>
            <person name="Munk A.C."/>
            <person name="Nandkeshwar R.D."/>
            <person name="Pitluck S."/>
            <person name="Pollard M."/>
            <person name="Predki P."/>
            <person name="Parson-Quintana B."/>
            <person name="Ramirez L."/>
            <person name="Rash S."/>
            <person name="Retterer J."/>
            <person name="Ricke D.O."/>
            <person name="Robinson D.L."/>
            <person name="Rodriguez A."/>
            <person name="Salamov A."/>
            <person name="Saunders E.H."/>
            <person name="Scott D."/>
            <person name="Shough T."/>
            <person name="Stallings R.L."/>
            <person name="Stalvey M."/>
            <person name="Sutherland R.D."/>
            <person name="Tapia R."/>
            <person name="Tesmer J.G."/>
            <person name="Thayer N."/>
            <person name="Thompson L.S."/>
            <person name="Tice H."/>
            <person name="Torney D.C."/>
            <person name="Tran-Gyamfi M."/>
            <person name="Tsai M."/>
            <person name="Ulanovsky L.E."/>
            <person name="Ustaszewska A."/>
            <person name="Vo N."/>
            <person name="White P.S."/>
            <person name="Williams A.L."/>
            <person name="Wills P.L."/>
            <person name="Wu J.-R."/>
            <person name="Wu K."/>
            <person name="Yang J."/>
            <person name="DeJong P."/>
            <person name="Bruce D."/>
            <person name="Doggett N.A."/>
            <person name="Deaven L."/>
            <person name="Schmutz J."/>
            <person name="Grimwood J."/>
            <person name="Richardson P."/>
            <person name="Rokhsar D.S."/>
            <person name="Eichler E.E."/>
            <person name="Gilna P."/>
            <person name="Lucas S.M."/>
            <person name="Myers R.M."/>
            <person name="Rubin E.M."/>
            <person name="Pennacchio L.A."/>
        </authorList>
    </citation>
    <scope>NUCLEOTIDE SEQUENCE [LARGE SCALE GENOMIC DNA]</scope>
</reference>
<reference key="4">
    <citation type="journal article" date="2004" name="Genome Res.">
        <title>The status, quality, and expansion of the NIH full-length cDNA project: the Mammalian Gene Collection (MGC).</title>
        <authorList>
            <consortium name="The MGC Project Team"/>
        </authorList>
    </citation>
    <scope>NUCLEOTIDE SEQUENCE [LARGE SCALE MRNA] (ISOFORM 1)</scope>
    <source>
        <tissue>Skin</tissue>
    </source>
</reference>
<reference key="5">
    <citation type="journal article" date="1995" name="FEBS Lett.">
        <title>ClC-6 and ClC-7 are two novel broadly expressed members of the CLC chloride channel family.</title>
        <authorList>
            <person name="Brandt S."/>
            <person name="Jentsch T.J."/>
        </authorList>
    </citation>
    <scope>NUCLEOTIDE SEQUENCE [MRNA] OF 17-805 (ISOFORM 1)</scope>
    <source>
        <tissue>Brain</tissue>
    </source>
</reference>
<reference key="6">
    <citation type="journal article" date="1998" name="Biochim. Biophys. Acta">
        <title>The exon-intron architecture of human chloride channel genes is not conserved.</title>
        <authorList>
            <person name="Eggermont J."/>
        </authorList>
    </citation>
    <scope>NUCLEOTIDE SEQUENCE [GENOMIC DNA] OF 275-432</scope>
</reference>
<reference key="7">
    <citation type="submission" date="1997-03" db="EMBL/GenBank/DDBJ databases">
        <authorList>
            <person name="Schutte B.C."/>
            <person name="Malik M.I."/>
            <person name="Fingert J."/>
            <person name="Stone E."/>
            <person name="Lamb F.S."/>
        </authorList>
    </citation>
    <scope>NUCLEOTIDE SEQUENCE [MRNA] OF 744-805 (ISOFORM 1)</scope>
    <source>
        <tissue>Mammary gland</tissue>
    </source>
</reference>
<reference key="8">
    <citation type="journal article" date="2006" name="Cell">
        <title>Global, in vivo, and site-specific phosphorylation dynamics in signaling networks.</title>
        <authorList>
            <person name="Olsen J.V."/>
            <person name="Blagoev B."/>
            <person name="Gnad F."/>
            <person name="Macek B."/>
            <person name="Kumar C."/>
            <person name="Mortensen P."/>
            <person name="Mann M."/>
        </authorList>
    </citation>
    <scope>IDENTIFICATION BY MASS SPECTROMETRY [LARGE SCALE ANALYSIS]</scope>
    <source>
        <tissue>Cervix carcinoma</tissue>
    </source>
</reference>
<reference key="9">
    <citation type="journal article" date="2007" name="Traffic">
        <title>Integral and associated lysosomal membrane proteins.</title>
        <authorList>
            <person name="Schroeder B."/>
            <person name="Wrocklage C."/>
            <person name="Pan C."/>
            <person name="Jaeger R."/>
            <person name="Koesters B."/>
            <person name="Schaefer H."/>
            <person name="Elsaesser H.-P."/>
            <person name="Mann M."/>
            <person name="Hasilik A."/>
        </authorList>
    </citation>
    <scope>SUBCELLULAR LOCATION [LARGE SCALE ANALYSIS]</scope>
    <source>
        <tissue>Placenta</tissue>
    </source>
</reference>
<reference key="10">
    <citation type="journal article" date="2008" name="Nature">
        <title>The Cl-/H+ antiporter ClC-7 is the primary chloride permeation pathway in lysosomes.</title>
        <authorList>
            <person name="Graves A.R."/>
            <person name="Curran P.K."/>
            <person name="Smith C.L."/>
            <person name="Mindell J.A."/>
        </authorList>
    </citation>
    <scope>FUNCTION</scope>
    <scope>SUBCELLULAR LOCATION</scope>
    <scope>CATALYTIC ACTIVITY</scope>
</reference>
<reference key="11">
    <citation type="journal article" date="2008" name="Proc. Natl. Acad. Sci. U.S.A.">
        <title>A quantitative atlas of mitotic phosphorylation.</title>
        <authorList>
            <person name="Dephoure N."/>
            <person name="Zhou C."/>
            <person name="Villen J."/>
            <person name="Beausoleil S.A."/>
            <person name="Bakalarski C.E."/>
            <person name="Elledge S.J."/>
            <person name="Gygi S.P."/>
        </authorList>
    </citation>
    <scope>IDENTIFICATION BY MASS SPECTROMETRY [LARGE SCALE ANALYSIS]</scope>
    <source>
        <tissue>Cervix carcinoma</tissue>
    </source>
</reference>
<reference key="12">
    <citation type="journal article" date="2009" name="Sci. Signal.">
        <title>Quantitative phosphoproteomic analysis of T cell receptor signaling reveals system-wide modulation of protein-protein interactions.</title>
        <authorList>
            <person name="Mayya V."/>
            <person name="Lundgren D.H."/>
            <person name="Hwang S.-I."/>
            <person name="Rezaul K."/>
            <person name="Wu L."/>
            <person name="Eng J.K."/>
            <person name="Rodionov V."/>
            <person name="Han D.K."/>
        </authorList>
    </citation>
    <scope>IDENTIFICATION BY MASS SPECTROMETRY [LARGE SCALE ANALYSIS]</scope>
    <source>
        <tissue>Leukemic T-cell</tissue>
    </source>
</reference>
<reference key="13">
    <citation type="journal article" date="2011" name="EMBO J.">
        <title>ClC-7 is a slowly voltage-gated 2Cl(-)/1H(+)-exchanger and requires Ostm1 for transport activity.</title>
        <authorList>
            <person name="Leisle L."/>
            <person name="Ludwig C.F."/>
            <person name="Wagner F.A."/>
            <person name="Jentsch T.J."/>
            <person name="Stauber T."/>
        </authorList>
    </citation>
    <scope>FUNCTION</scope>
    <scope>SUBUNIT</scope>
    <scope>INTERACTION WITH OSTM1</scope>
    <scope>SUBCELLULAR LOCATION</scope>
</reference>
<reference key="14">
    <citation type="journal article" date="2011" name="Sci. Signal.">
        <title>System-wide temporal characterization of the proteome and phosphoproteome of human embryonic stem cell differentiation.</title>
        <authorList>
            <person name="Rigbolt K.T."/>
            <person name="Prokhorova T.A."/>
            <person name="Akimov V."/>
            <person name="Henningsen J."/>
            <person name="Johansen P.T."/>
            <person name="Kratchmarova I."/>
            <person name="Kassem M."/>
            <person name="Mann M."/>
            <person name="Olsen J.V."/>
            <person name="Blagoev B."/>
        </authorList>
    </citation>
    <scope>IDENTIFICATION BY MASS SPECTROMETRY [LARGE SCALE ANALYSIS]</scope>
</reference>
<reference key="15">
    <citation type="journal article" date="2013" name="J. Proteome Res.">
        <title>Toward a comprehensive characterization of a human cancer cell phosphoproteome.</title>
        <authorList>
            <person name="Zhou H."/>
            <person name="Di Palma S."/>
            <person name="Preisinger C."/>
            <person name="Peng M."/>
            <person name="Polat A.N."/>
            <person name="Heck A.J."/>
            <person name="Mohammed S."/>
        </authorList>
    </citation>
    <scope>PHOSPHORYLATION [LARGE SCALE ANALYSIS] AT SER-801</scope>
    <scope>IDENTIFICATION BY MASS SPECTROMETRY [LARGE SCALE ANALYSIS]</scope>
    <source>
        <tissue>Cervix carcinoma</tissue>
        <tissue>Erythroleukemia</tissue>
    </source>
</reference>
<reference key="16">
    <citation type="journal article" date="2014" name="J. Proteomics">
        <title>An enzyme assisted RP-RPLC approach for in-depth analysis of human liver phosphoproteome.</title>
        <authorList>
            <person name="Bian Y."/>
            <person name="Song C."/>
            <person name="Cheng K."/>
            <person name="Dong M."/>
            <person name="Wang F."/>
            <person name="Huang J."/>
            <person name="Sun D."/>
            <person name="Wang L."/>
            <person name="Ye M."/>
            <person name="Zou H."/>
        </authorList>
    </citation>
    <scope>PHOSPHORYLATION [LARGE SCALE ANALYSIS] AT SER-60</scope>
    <scope>IDENTIFICATION BY MASS SPECTROMETRY [LARGE SCALE ANALYSIS]</scope>
    <source>
        <tissue>Liver</tissue>
    </source>
</reference>
<reference key="17">
    <citation type="journal article" date="2001" name="Cell">
        <title>Loss of the ClC-7 chloride channel leads to osteopetrosis in mice and man.</title>
        <authorList>
            <person name="Kornak U."/>
            <person name="Kasper D."/>
            <person name="Boesl M.R."/>
            <person name="Kaiser E."/>
            <person name="Schweizer M."/>
            <person name="Schulz A."/>
            <person name="Friedrich W."/>
            <person name="Delling G."/>
            <person name="Jentsch T.J."/>
        </authorList>
    </citation>
    <scope>VARIANT OPTB4 GLN-762</scope>
</reference>
<reference key="18">
    <citation type="journal article" date="2001" name="Hum. Mol. Genet.">
        <title>Albers-Schonberg disease (autosomal dominant osteopetrosis, type II) results from mutations in the ClCN7 chloride channel gene.</title>
        <authorList>
            <person name="Cleiren E."/>
            <person name="Benichou O."/>
            <person name="Van Hul E."/>
            <person name="Gram J."/>
            <person name="Bollerslav J."/>
            <person name="Singer F.R."/>
            <person name="Beaverson K."/>
            <person name="Aledo A."/>
            <person name="Whyte M.P."/>
            <person name="Yoneyama T."/>
            <person name="de Vernejoul M.-C."/>
            <person name="Van Hul W."/>
        </authorList>
    </citation>
    <scope>VARIANT OPTB4 PRO-766</scope>
    <scope>VARIANT OPTA2 TRP-767</scope>
</reference>
<reference key="19">
    <citation type="journal article" date="2003" name="J. Bone Miner. Res.">
        <title>Chloride channel ClCN7 mutations are responsible for severe recessive, dominant, and intermediate osteopetrosis.</title>
        <authorList>
            <person name="Frattini A."/>
            <person name="Pangrazio A."/>
            <person name="Susani L."/>
            <person name="Sobacchi C."/>
            <person name="Mirolo M."/>
            <person name="Abinun M."/>
            <person name="Andolina M."/>
            <person name="Flanagan A."/>
            <person name="Horwitz E.M."/>
            <person name="Mihci E."/>
            <person name="Notarangelo L.D."/>
            <person name="Ramenghi U."/>
            <person name="Teti A."/>
            <person name="Van Hove J."/>
            <person name="Vujic D."/>
            <person name="Young T."/>
            <person name="Albertini A."/>
            <person name="Orchard P.J."/>
            <person name="Vezzoni P."/>
            <person name="Villa A."/>
        </authorList>
    </citation>
    <scope>VARIANTS OPTB4 ARG-240; ARG-249; VAL-332; TRP-526; PRO-614; PHE-744; GLN-767 AND TRP-767</scope>
    <scope>VARIANTS OPTA2 ARG-215; GLN-286; PHE-490 AND VAL-677</scope>
    <scope>VARIANT MET-418</scope>
</reference>
<reference key="20">
    <citation type="journal article" date="2007" name="J. Hum. Genet.">
        <title>DNA-based diagnosis of malignant osteopetrosis by whole-genome scan using a single-nucleotide polymorphism microarray: standardization of molecular investigations of genetic diseases due to consanguinity.</title>
        <authorList>
            <person name="Lam C.-W."/>
            <person name="Tong S.-F."/>
            <person name="Wong K."/>
            <person name="Luo Y.F."/>
            <person name="Tang H.-Y."/>
            <person name="Ha S.-Y."/>
            <person name="Chan M.H.-M."/>
        </authorList>
    </citation>
    <scope>VARIANT OPTB4 PHE-261</scope>
</reference>
<reference key="21">
    <citation type="journal article" date="2009" name="J. Bone Miner. Metab.">
        <title>Identification of the CLCN7 gene mutations in two Chinese families with autosomal dominant osteopetrosis (type II).</title>
        <authorList>
            <person name="Zhang Z.L."/>
            <person name="He J.W."/>
            <person name="Zhang H."/>
            <person name="Hu W.W."/>
            <person name="Fu W.Z."/>
            <person name="Gu J.M."/>
            <person name="Yu J.B."/>
            <person name="Gao G."/>
            <person name="Hu Y.Q."/>
            <person name="Li M."/>
            <person name="Liu Y.J."/>
        </authorList>
    </citation>
    <scope>VARIANT OPTA2 TRP-767</scope>
</reference>
<reference key="22">
    <citation type="journal article" date="2010" name="Hum. Mutat.">
        <title>Molecular and clinical heterogeneity in CLCN7-dependent osteopetrosis: report of 20 novel mutations.</title>
        <authorList>
            <person name="Pangrazio A."/>
            <person name="Pusch M."/>
            <person name="Caldana E."/>
            <person name="Frattini A."/>
            <person name="Lanino E."/>
            <person name="Tamhankar P.M."/>
            <person name="Phadke S."/>
            <person name="Lopez A.G."/>
            <person name="Orchard P."/>
            <person name="Mihci E."/>
            <person name="Abinun M."/>
            <person name="Wright M."/>
            <person name="Vettenranta K."/>
            <person name="Bariae I."/>
            <person name="Melis D."/>
            <person name="Tezcan I."/>
            <person name="Baumann C."/>
            <person name="Locatelli F."/>
            <person name="Zecca M."/>
            <person name="Horwitz E."/>
            <person name="Mansour L.S."/>
            <person name="Van Roij M."/>
            <person name="Vezzoni P."/>
            <person name="Villa A."/>
            <person name="Sobacchi C."/>
        </authorList>
    </citation>
    <scope>VARIANTS OPTB4 PRO-132; SER-214; LEU-227 DEL; ARG-240; GLN-403; ARG-521; GLN-526; TRP-526; PRO-549; PRO-651; TRP-762 AND PRO-767</scope>
    <scope>VARIANTS OPTA2 ARG-215; GLN-286; LEU-318; LEU-758; GLN-762 AND TRP-767</scope>
</reference>
<reference key="23">
    <citation type="journal article" date="2016" name="Osteoporos. Int.">
        <title>Novel mutations of CLCN7 cause autosomal dominant osteopetrosis type II (ADO-II) and intermediate autosomal recessive osteopetrosis (IARO) in Chinese patients.</title>
        <authorList>
            <person name="Pang Q."/>
            <person name="Chi Y."/>
            <person name="Zhao Z."/>
            <person name="Xing X."/>
            <person name="Li M."/>
            <person name="Wang O."/>
            <person name="Jiang Y."/>
            <person name="Liao R."/>
            <person name="Sun Y."/>
            <person name="Dong J."/>
            <person name="Xia W."/>
        </authorList>
    </citation>
    <scope>VARIANTS OPTA2 PHE-213; TRP-286; TYR-290; GLY-326; ARG-347; ASN-473 AND PRO-564</scope>
    <scope>VARIANT OPTB4 ARG-224</scope>
</reference>
<reference key="24">
    <citation type="journal article" date="2016" name="Gene">
        <title>A novel mutation and a known mutation in the CLCN7 gene associated with relatively stable infantile malignant osteopetrosis in a Chinese patient.</title>
        <authorList>
            <person name="Zeng B."/>
            <person name="Li R."/>
            <person name="Hu Y."/>
            <person name="Hu B."/>
            <person name="Zhao Q."/>
            <person name="Liu H."/>
            <person name="Yuan P."/>
            <person name="Wang Y."/>
        </authorList>
    </citation>
    <scope>VARIANT OPTB4 VAL-299</scope>
</reference>
<reference key="25">
    <citation type="journal article" date="2019" name="Am. J. Hum. Genet.">
        <title>Lysosomal Storage and Albinism Due to Effects of a De Novo CLCN7 Variant on Lysosomal Acidification.</title>
        <authorList>
            <consortium name="Undiagnosed Diseases Network"/>
            <person name="Nicoli E.R."/>
            <person name="Weston M.R."/>
            <person name="Hackbarth M."/>
            <person name="Becerril A."/>
            <person name="Larson A."/>
            <person name="Zein W.M."/>
            <person name="Baker P.R. II"/>
            <person name="Burke J.D."/>
            <person name="Dorward H."/>
            <person name="Davids M."/>
            <person name="Huang Y."/>
            <person name="Adams D.R."/>
            <person name="Zerfas P.M."/>
            <person name="Chen D."/>
            <person name="Markello T.C."/>
            <person name="Toro C."/>
            <person name="Wood T."/>
            <person name="Elliott G."/>
            <person name="Vu M."/>
            <person name="Zheng W."/>
            <person name="Garrett L.J."/>
            <person name="Tifft C.J."/>
            <person name="Gahl W.A."/>
            <person name="Day-Salvatore D.L."/>
            <person name="Mindell J.A."/>
            <person name="Malicdan M.C.V."/>
        </authorList>
    </citation>
    <scope>FUNCTION</scope>
    <scope>TISSUE SPECIFICITY</scope>
    <scope>INVOLVEMENT IN HOD</scope>
    <scope>VARIANT HOD CYS-715</scope>
    <scope>CHARACTERIZATION OF VARIANT HOD CYS-715</scope>
</reference>
<name>CLCN7_HUMAN</name>
<keyword id="KW-0002">3D-structure</keyword>
<keyword id="KW-0025">Alternative splicing</keyword>
<keyword id="KW-0050">Antiport</keyword>
<keyword id="KW-0067">ATP-binding</keyword>
<keyword id="KW-0129">CBS domain</keyword>
<keyword id="KW-0868">Chloride</keyword>
<keyword id="KW-0225">Disease variant</keyword>
<keyword id="KW-0406">Ion transport</keyword>
<keyword id="KW-0458">Lysosome</keyword>
<keyword id="KW-0472">Membrane</keyword>
<keyword id="KW-0547">Nucleotide-binding</keyword>
<keyword id="KW-0987">Osteopetrosis</keyword>
<keyword id="KW-0597">Phosphoprotein</keyword>
<keyword id="KW-1267">Proteomics identification</keyword>
<keyword id="KW-1185">Reference proteome</keyword>
<keyword id="KW-0677">Repeat</keyword>
<keyword id="KW-0812">Transmembrane</keyword>
<keyword id="KW-1133">Transmembrane helix</keyword>
<keyword id="KW-0813">Transport</keyword>
<sequence>MANVSKKVSWSGRDRDDEEAAPLLRRTARPGGGTPLLNGAGPGAARQSPRSALFRVGHMSSVELDDELLDPDMDPPHPFPKEIPHNEKLLSLKYESLDYDNSENQLFLEEERRINHTAFRTVEIKRWVICALIGILTGLVACFIDIVVENLAGLKYRVIKGNIDKFTEKGGLSFSLLLWATLNAAFVLVGSVIVAFIEPVAAGSGIPQIKCFLNGVKIPHVVRLKTLVIKVSGVILSVVGGLAVGKEGPMIHSGSVIAAGISQGRSTSLKRDFKIFEYFRRDTEKRDFVSAGAAAGVSAAFGAPVGGVLFSLEEGASFWNQFLTWRIFFASMISTFTLNFVLSIYHGNMWDLSSPGLINFGRFDSEKMAYTIHEIPVFIAMGVVGGVLGAVFNALNYWLTMFRIRYIHRPCLQVIEAVLVAAVTATVAFVLIYSSRDCQPLQGGSMSYPLQLFCADGEYNSMAAAFFNTPEKSVVSLFHDPPGSYNPLTLGLFTLVYFFLACWTYGLTVSAGVFIPSLLIGAAWGRLFGISLSYLTGAAIWADPGKYALMGAAAQLGGIVRMTLSLTVIMMEATSNVTYGFPIMLVLMTAKIVGDVFIEGLYDMHIQLQSVPFLHWEAPVTSHSLTAREVMSTPVTCLRRREKVGVIVDVLSDTASNHNGFPVVEHADDTQPARLQGLILRSQLIVLLKHKVFVERSNLGLVQRRLRLKDFRDAYPRFPPIQSIHVSQDERECTMDLSEFMNPSPYTVPQEASLPRVFKLFRALGLRHLVVVDNRNQVVGLVTRKDLARYRLGKRGLEELSLAQT</sequence>
<protein>
    <recommendedName>
        <fullName>H(+)/Cl(-) exchange transporter 7</fullName>
    </recommendedName>
    <alternativeName>
        <fullName>Chloride channel 7 alpha subunit</fullName>
    </alternativeName>
    <alternativeName>
        <fullName>Chloride channel protein 7</fullName>
        <shortName>ClC-7</shortName>
    </alternativeName>
</protein>
<organism>
    <name type="scientific">Homo sapiens</name>
    <name type="common">Human</name>
    <dbReference type="NCBI Taxonomy" id="9606"/>
    <lineage>
        <taxon>Eukaryota</taxon>
        <taxon>Metazoa</taxon>
        <taxon>Chordata</taxon>
        <taxon>Craniata</taxon>
        <taxon>Vertebrata</taxon>
        <taxon>Euteleostomi</taxon>
        <taxon>Mammalia</taxon>
        <taxon>Eutheria</taxon>
        <taxon>Euarchontoglires</taxon>
        <taxon>Primates</taxon>
        <taxon>Haplorrhini</taxon>
        <taxon>Catarrhini</taxon>
        <taxon>Hominidae</taxon>
        <taxon>Homo</taxon>
    </lineage>
</organism>
<feature type="chain" id="PRO_0000094452" description="H(+)/Cl(-) exchange transporter 7">
    <location>
        <begin position="1"/>
        <end position="805"/>
    </location>
</feature>
<feature type="topological domain" description="Cytoplasmic" evidence="1">
    <location>
        <begin position="1"/>
        <end position="126"/>
    </location>
</feature>
<feature type="transmembrane region" description="Helical" evidence="1">
    <location>
        <begin position="127"/>
        <end position="159"/>
    </location>
</feature>
<feature type="transmembrane region" description="Helical" evidence="1">
    <location>
        <begin position="174"/>
        <end position="197"/>
    </location>
</feature>
<feature type="intramembrane region" description="Helical" evidence="1">
    <location>
        <begin position="206"/>
        <end position="213"/>
    </location>
</feature>
<feature type="transmembrane region" description="Helical" evidence="1">
    <location>
        <begin position="223"/>
        <end position="241"/>
    </location>
</feature>
<feature type="transmembrane region" description="Helical" evidence="1">
    <location>
        <begin position="247"/>
        <end position="264"/>
    </location>
</feature>
<feature type="intramembrane region" description="Helical" evidence="1">
    <location>
        <begin position="288"/>
        <end position="300"/>
    </location>
</feature>
<feature type="intramembrane region" description="Helical" evidence="1">
    <location>
        <begin position="304"/>
        <end position="312"/>
    </location>
</feature>
<feature type="transmembrane region" description="Helical" evidence="1">
    <location>
        <begin position="322"/>
        <end position="341"/>
    </location>
</feature>
<feature type="transmembrane region" description="Helical" evidence="1">
    <location>
        <begin position="375"/>
        <end position="405"/>
    </location>
</feature>
<feature type="transmembrane region" description="Helical" evidence="1">
    <location>
        <begin position="410"/>
        <end position="432"/>
    </location>
</feature>
<feature type="transmembrane region" description="Helical" evidence="1">
    <location>
        <begin position="487"/>
        <end position="507"/>
    </location>
</feature>
<feature type="transmembrane region" description="Helical" evidence="1">
    <location>
        <begin position="512"/>
        <end position="535"/>
    </location>
</feature>
<feature type="intramembrane region" description="Helical" evidence="1">
    <location>
        <begin position="545"/>
        <end position="559"/>
    </location>
</feature>
<feature type="intramembrane region" description="Note=Loop between two helices" evidence="1">
    <location>
        <begin position="560"/>
        <end position="562"/>
    </location>
</feature>
<feature type="intramembrane region" description="Helical" evidence="1">
    <location>
        <begin position="563"/>
        <end position="574"/>
    </location>
</feature>
<feature type="intramembrane region" description="Note=Loop between two helices" evidence="1">
    <location>
        <begin position="575"/>
        <end position="578"/>
    </location>
</feature>
<feature type="transmembrane region" description="Helical" evidence="1">
    <location>
        <begin position="579"/>
        <end position="597"/>
    </location>
</feature>
<feature type="topological domain" description="Cytoplasmic" evidence="1">
    <location>
        <begin position="598"/>
        <end position="805"/>
    </location>
</feature>
<feature type="domain" description="CBS 1" evidence="4">
    <location>
        <begin position="631"/>
        <end position="695"/>
    </location>
</feature>
<feature type="domain" description="CBS 2" evidence="4">
    <location>
        <begin position="741"/>
        <end position="799"/>
    </location>
</feature>
<feature type="region of interest" description="Disordered" evidence="5">
    <location>
        <begin position="1"/>
        <end position="49"/>
    </location>
</feature>
<feature type="short sequence motif" description="Selectivity filter part_1" evidence="1">
    <location>
        <begin position="203"/>
        <end position="207"/>
    </location>
</feature>
<feature type="short sequence motif" description="Selectivity filter part_2" evidence="1">
    <location>
        <begin position="245"/>
        <end position="249"/>
    </location>
</feature>
<feature type="short sequence motif" description="Selectivity filter part_3" evidence="1">
    <location>
        <begin position="512"/>
        <end position="516"/>
    </location>
</feature>
<feature type="binding site" evidence="1">
    <location>
        <position position="204"/>
    </location>
    <ligand>
        <name>chloride</name>
        <dbReference type="ChEBI" id="CHEBI:17996"/>
    </ligand>
</feature>
<feature type="binding site" evidence="1">
    <location>
        <position position="514"/>
    </location>
    <ligand>
        <name>chloride</name>
        <dbReference type="ChEBI" id="CHEBI:17996"/>
    </ligand>
</feature>
<feature type="binding site" evidence="1">
    <location>
        <position position="602"/>
    </location>
    <ligand>
        <name>chloride</name>
        <dbReference type="ChEBI" id="CHEBI:17996"/>
    </ligand>
</feature>
<feature type="binding site" evidence="1">
    <location>
        <begin position="658"/>
        <end position="660"/>
    </location>
    <ligand>
        <name>ATP</name>
        <dbReference type="ChEBI" id="CHEBI:30616"/>
    </ligand>
</feature>
<feature type="binding site" evidence="1">
    <location>
        <begin position="783"/>
        <end position="786"/>
    </location>
    <ligand>
        <name>ATP</name>
        <dbReference type="ChEBI" id="CHEBI:30616"/>
    </ligand>
</feature>
<feature type="site" description="Mediates proton transfer from the outer aqueous phase to the interior of the protein; involved in linking H(+) and Cl(-) transport" evidence="1">
    <location>
        <position position="247"/>
    </location>
</feature>
<feature type="site" description="Mediates proton transfer from the protein to the inner aqueous phase" evidence="1">
    <location>
        <position position="314"/>
    </location>
</feature>
<feature type="modified residue" description="Phosphoserine" evidence="2">
    <location>
        <position position="9"/>
    </location>
</feature>
<feature type="modified residue" description="Phosphoserine" evidence="23">
    <location>
        <position position="60"/>
    </location>
</feature>
<feature type="modified residue" description="Phosphoserine" evidence="22">
    <location>
        <position position="801"/>
    </location>
</feature>
<feature type="splice variant" id="VSP_045698" description="In isoform 2." evidence="18">
    <location>
        <begin position="48"/>
        <end position="71"/>
    </location>
</feature>
<feature type="sequence variant" id="VAR_064637" description="In OPTB4." evidence="13">
    <original>L</original>
    <variation>P</variation>
    <location>
        <position position="132"/>
    </location>
</feature>
<feature type="sequence variant" id="VAR_075576" description="In OPTA2; uncertain significance." evidence="15">
    <original>L</original>
    <variation>F</variation>
    <location>
        <position position="213"/>
    </location>
</feature>
<feature type="sequence variant" id="VAR_064638" description="In OPTB4; dbSNP:rs367567630." evidence="13">
    <original>N</original>
    <variation>S</variation>
    <location>
        <position position="214"/>
    </location>
</feature>
<feature type="sequence variant" id="VAR_020997" description="In OPTA2; dbSNP:rs397515539." evidence="8 13">
    <original>G</original>
    <variation>R</variation>
    <location>
        <position position="215"/>
    </location>
</feature>
<feature type="sequence variant" id="VAR_075577" description="In OPTB4; uncertain significance." evidence="15">
    <original>L</original>
    <variation>R</variation>
    <location>
        <position position="224"/>
    </location>
</feature>
<feature type="sequence variant" id="VAR_064639" description="In OPTB4; dbSNP:rs760209068." evidence="13">
    <location>
        <position position="227"/>
    </location>
</feature>
<feature type="sequence variant" id="VAR_020998" description="In OPTB4; dbSNP:rs1360480518." evidence="8 13">
    <original>G</original>
    <variation>R</variation>
    <location>
        <position position="240"/>
    </location>
</feature>
<feature type="sequence variant" id="VAR_020999" description="In OPTB4." evidence="8">
    <original>P</original>
    <variation>R</variation>
    <location>
        <position position="249"/>
    </location>
</feature>
<feature type="sequence variant" id="VAR_037427" description="In OPTB4; dbSNP:rs121434436." evidence="9">
    <original>I</original>
    <variation>F</variation>
    <location>
        <position position="261"/>
    </location>
</feature>
<feature type="sequence variant" id="VAR_021000" description="In OPTA2; dbSNP:rs760956030." evidence="8 13">
    <original>R</original>
    <variation>Q</variation>
    <location>
        <position position="286"/>
    </location>
</feature>
<feature type="sequence variant" id="VAR_075578" description="In OPTA2; uncertain significance; dbSNP:rs1291061962." evidence="15">
    <original>R</original>
    <variation>W</variation>
    <location>
        <position position="286"/>
    </location>
</feature>
<feature type="sequence variant" id="VAR_075579" description="In OPTA2; uncertain significance." evidence="15">
    <original>S</original>
    <variation>Y</variation>
    <location>
        <position position="290"/>
    </location>
</feature>
<feature type="sequence variant" id="VAR_075580" description="In OPTB4; uncertain significance; dbSNP:rs977932714." evidence="16">
    <original>A</original>
    <variation>V</variation>
    <location>
        <position position="299"/>
    </location>
</feature>
<feature type="sequence variant" id="VAR_064640" description="In OPTA2; dbSNP:rs2038825509." evidence="13">
    <original>F</original>
    <variation>L</variation>
    <location>
        <position position="318"/>
    </location>
</feature>
<feature type="sequence variant" id="VAR_075581" description="In OPTA2; uncertain significance." evidence="15">
    <original>R</original>
    <variation>G</variation>
    <location>
        <position position="326"/>
    </location>
</feature>
<feature type="sequence variant" id="VAR_021001" description="In OPTB4; dbSNP:rs2142378539." evidence="8">
    <original>M</original>
    <variation>V</variation>
    <location>
        <position position="332"/>
    </location>
</feature>
<feature type="sequence variant" id="VAR_075582" description="In OPTA2; uncertain significance." evidence="15">
    <original>G</original>
    <variation>R</variation>
    <location>
        <position position="347"/>
    </location>
</feature>
<feature type="sequence variant" id="VAR_064641" description="In OPTB4; dbSNP:rs765444328." evidence="13">
    <original>R</original>
    <variation>Q</variation>
    <location>
        <position position="403"/>
    </location>
</feature>
<feature type="sequence variant" id="VAR_021002" description="In dbSNP:rs12926089." evidence="8">
    <original>V</original>
    <variation>M</variation>
    <location>
        <position position="418"/>
    </location>
</feature>
<feature type="sequence variant" id="VAR_075583" description="In OPTA2; uncertain significance." evidence="15">
    <original>S</original>
    <variation>N</variation>
    <location>
        <position position="473"/>
    </location>
</feature>
<feature type="sequence variant" id="VAR_021003" description="In OPTA2." evidence="8">
    <original>L</original>
    <variation>F</variation>
    <location>
        <position position="490"/>
    </location>
</feature>
<feature type="sequence variant" id="VAR_064642" description="In OPTB4; dbSNP:rs368190250." evidence="13">
    <original>G</original>
    <variation>R</variation>
    <location>
        <position position="521"/>
    </location>
</feature>
<feature type="sequence variant" id="VAR_064643" description="In OPTB4; dbSNP:rs139329533." evidence="13">
    <original>R</original>
    <variation>Q</variation>
    <location>
        <position position="526"/>
    </location>
</feature>
<feature type="sequence variant" id="VAR_021004" description="In OPTB4; dbSNP:rs1233085260." evidence="8 13">
    <original>R</original>
    <variation>W</variation>
    <location>
        <position position="526"/>
    </location>
</feature>
<feature type="sequence variant" id="VAR_064644" description="In OPTB4." evidence="13">
    <original>L</original>
    <variation>P</variation>
    <location>
        <position position="549"/>
    </location>
</feature>
<feature type="sequence variant" id="VAR_075584" description="In OPTA2; uncertain significance." evidence="15">
    <original>L</original>
    <variation>P</variation>
    <location>
        <position position="564"/>
    </location>
</feature>
<feature type="sequence variant" id="VAR_021005" description="In OPTB4; dbSNP:rs1064794323." evidence="8">
    <original>L</original>
    <variation>P</variation>
    <location>
        <position position="614"/>
    </location>
</feature>
<feature type="sequence variant" id="VAR_064645" description="In OPTB4." evidence="13">
    <original>L</original>
    <variation>P</variation>
    <location>
        <position position="651"/>
    </location>
</feature>
<feature type="sequence variant" id="VAR_021006" description="In OPTA2; dbSNP:rs2142366157." evidence="8">
    <original>G</original>
    <variation>V</variation>
    <location>
        <position position="677"/>
    </location>
</feature>
<feature type="sequence variant" id="VAR_083175" description="In HOD; increased voltage-gated chloride channel activity; increased lysosomal lumen acidification; increased cytoplasmic vacuole size; dbSNP:rs1057517718." evidence="17">
    <original>Y</original>
    <variation>C</variation>
    <location>
        <position position="715"/>
    </location>
</feature>
<feature type="sequence variant" id="VAR_021007" description="In OPTB4; dbSNP:rs1320932332." evidence="8">
    <original>S</original>
    <variation>F</variation>
    <location>
        <position position="744"/>
    </location>
</feature>
<feature type="sequence variant" id="VAR_064646" description="In OPTA2; dbSNP:rs760740877." evidence="13">
    <original>F</original>
    <variation>L</variation>
    <location>
        <position position="758"/>
    </location>
</feature>
<feature type="sequence variant" id="VAR_017838" description="In OPTA2 and OPTB4; not detected in the fibroblasts from the patient; dbSNP:rs121434433." evidence="6 13">
    <original>R</original>
    <variation>Q</variation>
    <location>
        <position position="762"/>
    </location>
</feature>
<feature type="sequence variant" id="VAR_064647" description="In OPTB4; dbSNP:rs1490598538." evidence="13">
    <original>R</original>
    <variation>W</variation>
    <location>
        <position position="762"/>
    </location>
</feature>
<feature type="sequence variant" id="VAR_017839" description="In OPTB4; dbSNP:rs121434434." evidence="7">
    <original>L</original>
    <variation>P</variation>
    <location>
        <position position="766"/>
    </location>
</feature>
<feature type="sequence variant" id="VAR_064648" description="In OPTB4." evidence="13">
    <original>R</original>
    <variation>P</variation>
    <location>
        <position position="767"/>
    </location>
</feature>
<feature type="sequence variant" id="VAR_021008" description="In OPTB4; dbSNP:rs772579858." evidence="8">
    <original>R</original>
    <variation>Q</variation>
    <location>
        <position position="767"/>
    </location>
</feature>
<feature type="sequence variant" id="VAR_017840" description="In OPTA2 and OPTB4; dbSNP:rs121434435." evidence="7 8 12 13">
    <original>R</original>
    <variation>W</variation>
    <location>
        <position position="767"/>
    </location>
</feature>
<feature type="sequence conflict" description="In Ref. 2; BAF84825." evidence="20" ref="2">
    <original>D</original>
    <variation>V</variation>
    <location>
        <position position="74"/>
    </location>
</feature>
<feature type="sequence conflict" description="In Ref. 5; CAA91556." evidence="20" ref="5">
    <original>T</original>
    <variation>S</variation>
    <location>
        <position position="267"/>
    </location>
</feature>
<feature type="sequence conflict" description="In Ref. 5; CAA91556 and 6; CAA05083." evidence="20" ref="5 6">
    <original>F</original>
    <variation>L</variation>
    <location>
        <position position="279"/>
    </location>
</feature>
<feature type="sequence conflict" description="In Ref. 2; BAF84825." evidence="20" ref="2">
    <original>T</original>
    <variation>A</variation>
    <location>
        <position position="324"/>
    </location>
</feature>
<feature type="sequence conflict" description="In Ref. 2; BAG51745." evidence="20" ref="2">
    <original>N</original>
    <variation>S</variation>
    <location>
        <position position="348"/>
    </location>
</feature>
<feature type="sequence conflict" description="In Ref. 2; BAG51745." evidence="20" ref="2">
    <original>I</original>
    <variation>V</variation>
    <location>
        <position position="415"/>
    </location>
</feature>
<feature type="sequence conflict" description="In Ref. 2; BAG51745." evidence="20" ref="2">
    <original>D</original>
    <variation>G</variation>
    <location>
        <position position="710"/>
    </location>
</feature>
<feature type="helix" evidence="24">
    <location>
        <begin position="105"/>
        <end position="114"/>
    </location>
</feature>
<feature type="strand" evidence="24">
    <location>
        <begin position="116"/>
        <end position="118"/>
    </location>
</feature>
<feature type="helix" evidence="24">
    <location>
        <begin position="122"/>
        <end position="169"/>
    </location>
</feature>
<feature type="helix" evidence="24">
    <location>
        <begin position="172"/>
        <end position="195"/>
    </location>
</feature>
<feature type="helix" evidence="24">
    <location>
        <begin position="199"/>
        <end position="201"/>
    </location>
</feature>
<feature type="helix" evidence="24">
    <location>
        <begin position="206"/>
        <end position="214"/>
    </location>
</feature>
<feature type="strand" evidence="24">
    <location>
        <begin position="219"/>
        <end position="223"/>
    </location>
</feature>
<feature type="helix" evidence="24">
    <location>
        <begin position="224"/>
        <end position="239"/>
    </location>
</feature>
<feature type="strand" evidence="24">
    <location>
        <begin position="245"/>
        <end position="247"/>
    </location>
</feature>
<feature type="helix" evidence="24">
    <location>
        <begin position="248"/>
        <end position="250"/>
    </location>
</feature>
<feature type="helix" evidence="24">
    <location>
        <begin position="251"/>
        <end position="261"/>
    </location>
</feature>
<feature type="strand" evidence="24">
    <location>
        <begin position="263"/>
        <end position="266"/>
    </location>
</feature>
<feature type="turn" evidence="24">
    <location>
        <begin position="267"/>
        <end position="270"/>
    </location>
</feature>
<feature type="helix" evidence="24">
    <location>
        <begin position="277"/>
        <end position="279"/>
    </location>
</feature>
<feature type="helix" evidence="24">
    <location>
        <begin position="283"/>
        <end position="301"/>
    </location>
</feature>
<feature type="helix" evidence="24">
    <location>
        <begin position="304"/>
        <end position="313"/>
    </location>
</feature>
<feature type="helix" evidence="24">
    <location>
        <begin position="321"/>
        <end position="345"/>
    </location>
</feature>
<feature type="strand" evidence="24">
    <location>
        <begin position="355"/>
        <end position="358"/>
    </location>
</feature>
<feature type="strand" evidence="24">
    <location>
        <begin position="365"/>
        <end position="368"/>
    </location>
</feature>
<feature type="helix" evidence="25">
    <location>
        <begin position="372"/>
        <end position="374"/>
    </location>
</feature>
<feature type="helix" evidence="24">
    <location>
        <begin position="375"/>
        <end position="405"/>
    </location>
</feature>
<feature type="helix" evidence="24">
    <location>
        <begin position="410"/>
        <end position="433"/>
    </location>
</feature>
<feature type="strand" evidence="25">
    <location>
        <begin position="438"/>
        <end position="440"/>
    </location>
</feature>
<feature type="strand" evidence="24">
    <location>
        <begin position="443"/>
        <end position="445"/>
    </location>
</feature>
<feature type="strand" evidence="24">
    <location>
        <begin position="452"/>
        <end position="454"/>
    </location>
</feature>
<feature type="strand" evidence="24">
    <location>
        <begin position="459"/>
        <end position="461"/>
    </location>
</feature>
<feature type="helix" evidence="24">
    <location>
        <begin position="462"/>
        <end position="465"/>
    </location>
</feature>
<feature type="strand" evidence="24">
    <location>
        <begin position="466"/>
        <end position="468"/>
    </location>
</feature>
<feature type="helix" evidence="24">
    <location>
        <begin position="470"/>
        <end position="479"/>
    </location>
</feature>
<feature type="helix" evidence="24">
    <location>
        <begin position="487"/>
        <end position="504"/>
    </location>
</feature>
<feature type="strand" evidence="24">
    <location>
        <begin position="507"/>
        <end position="510"/>
    </location>
</feature>
<feature type="helix" evidence="24">
    <location>
        <begin position="514"/>
        <end position="535"/>
    </location>
</feature>
<feature type="helix" evidence="24">
    <location>
        <begin position="544"/>
        <end position="559"/>
    </location>
</feature>
<feature type="helix" evidence="24">
    <location>
        <begin position="566"/>
        <end position="573"/>
    </location>
</feature>
<feature type="helix" evidence="24">
    <location>
        <begin position="580"/>
        <end position="595"/>
    </location>
</feature>
<feature type="helix" evidence="24">
    <location>
        <begin position="601"/>
        <end position="607"/>
    </location>
</feature>
<feature type="turn" evidence="24">
    <location>
        <begin position="608"/>
        <end position="610"/>
    </location>
</feature>
<feature type="strand" evidence="24">
    <location>
        <begin position="623"/>
        <end position="626"/>
    </location>
</feature>
<feature type="helix" evidence="24">
    <location>
        <begin position="627"/>
        <end position="629"/>
    </location>
</feature>
<feature type="strand" evidence="24">
    <location>
        <begin position="631"/>
        <end position="634"/>
    </location>
</feature>
<feature type="strand" evidence="24">
    <location>
        <begin position="638"/>
        <end position="643"/>
    </location>
</feature>
<feature type="helix" evidence="24">
    <location>
        <begin position="644"/>
        <end position="651"/>
    </location>
</feature>
<feature type="strand" evidence="24">
    <location>
        <begin position="654"/>
        <end position="656"/>
    </location>
</feature>
<feature type="strand" evidence="24">
    <location>
        <begin position="660"/>
        <end position="664"/>
    </location>
</feature>
<feature type="strand" evidence="24">
    <location>
        <begin position="674"/>
        <end position="680"/>
    </location>
</feature>
<feature type="helix" evidence="24">
    <location>
        <begin position="681"/>
        <end position="689"/>
    </location>
</feature>
<feature type="helix" evidence="24">
    <location>
        <begin position="708"/>
        <end position="710"/>
    </location>
</feature>
<feature type="helix" evidence="24">
    <location>
        <begin position="721"/>
        <end position="723"/>
    </location>
</feature>
<feature type="helix" evidence="24">
    <location>
        <begin position="730"/>
        <end position="732"/>
    </location>
</feature>
<feature type="strand" evidence="24">
    <location>
        <begin position="733"/>
        <end position="736"/>
    </location>
</feature>
<feature type="strand" evidence="24">
    <location>
        <begin position="738"/>
        <end position="744"/>
    </location>
</feature>
<feature type="strand" evidence="24">
    <location>
        <begin position="747"/>
        <end position="749"/>
    </location>
</feature>
<feature type="helix" evidence="24">
    <location>
        <begin position="754"/>
        <end position="764"/>
    </location>
</feature>
<feature type="strand" evidence="24">
    <location>
        <begin position="769"/>
        <end position="772"/>
    </location>
</feature>
<feature type="strand" evidence="24">
    <location>
        <begin position="774"/>
        <end position="782"/>
    </location>
</feature>
<feature type="turn" evidence="24">
    <location>
        <begin position="786"/>
        <end position="788"/>
    </location>
</feature>
<dbReference type="EMBL" id="AF224741">
    <property type="protein sequence ID" value="AAF34711.1"/>
    <property type="molecule type" value="mRNA"/>
</dbReference>
<dbReference type="EMBL" id="AK056551">
    <property type="protein sequence ID" value="BAG51745.1"/>
    <property type="molecule type" value="mRNA"/>
</dbReference>
<dbReference type="EMBL" id="AK291404">
    <property type="protein sequence ID" value="BAF84093.1"/>
    <property type="molecule type" value="mRNA"/>
</dbReference>
<dbReference type="EMBL" id="AK292136">
    <property type="protein sequence ID" value="BAF84825.1"/>
    <property type="molecule type" value="mRNA"/>
</dbReference>
<dbReference type="EMBL" id="AL031600">
    <property type="status" value="NOT_ANNOTATED_CDS"/>
    <property type="molecule type" value="Genomic_DNA"/>
</dbReference>
<dbReference type="EMBL" id="AL031705">
    <property type="status" value="NOT_ANNOTATED_CDS"/>
    <property type="molecule type" value="Genomic_DNA"/>
</dbReference>
<dbReference type="EMBL" id="BC012737">
    <property type="protein sequence ID" value="AAH12737.1"/>
    <property type="molecule type" value="mRNA"/>
</dbReference>
<dbReference type="EMBL" id="Z67743">
    <property type="protein sequence ID" value="CAA91556.1"/>
    <property type="molecule type" value="mRNA"/>
</dbReference>
<dbReference type="EMBL" id="AJ001910">
    <property type="protein sequence ID" value="CAA05083.1"/>
    <property type="molecule type" value="Genomic_DNA"/>
</dbReference>
<dbReference type="EMBL" id="U88844">
    <property type="protein sequence ID" value="AAB48530.1"/>
    <property type="molecule type" value="mRNA"/>
</dbReference>
<dbReference type="CCDS" id="CCDS32361.1">
    <molecule id="P51798-1"/>
</dbReference>
<dbReference type="PIR" id="S68427">
    <property type="entry name" value="S68427"/>
</dbReference>
<dbReference type="RefSeq" id="NP_001107803.1">
    <molecule id="P51798-2"/>
    <property type="nucleotide sequence ID" value="NM_001114331.3"/>
</dbReference>
<dbReference type="RefSeq" id="NP_001278.1">
    <molecule id="P51798-1"/>
    <property type="nucleotide sequence ID" value="NM_001287.6"/>
</dbReference>
<dbReference type="PDB" id="7BXU">
    <property type="method" value="EM"/>
    <property type="resolution" value="3.70 A"/>
    <property type="chains" value="A/B=1-805"/>
</dbReference>
<dbReference type="PDB" id="7CQ5">
    <property type="method" value="EM"/>
    <property type="resolution" value="2.60 A"/>
    <property type="chains" value="C/D=1-805"/>
</dbReference>
<dbReference type="PDB" id="7CQ6">
    <property type="method" value="EM"/>
    <property type="resolution" value="3.00 A"/>
    <property type="chains" value="C/D=1-805"/>
</dbReference>
<dbReference type="PDB" id="7CQ7">
    <property type="method" value="EM"/>
    <property type="resolution" value="3.55 A"/>
    <property type="chains" value="C/D=1-805"/>
</dbReference>
<dbReference type="PDB" id="7JM7">
    <property type="method" value="EM"/>
    <property type="resolution" value="2.82 A"/>
    <property type="chains" value="A/C=1-805"/>
</dbReference>
<dbReference type="PDB" id="8HVT">
    <property type="method" value="EM"/>
    <property type="resolution" value="3.60 A"/>
    <property type="chains" value="A/C=1-805"/>
</dbReference>
<dbReference type="PDBsum" id="7BXU"/>
<dbReference type="PDBsum" id="7CQ5"/>
<dbReference type="PDBsum" id="7CQ6"/>
<dbReference type="PDBsum" id="7CQ7"/>
<dbReference type="PDBsum" id="7JM7"/>
<dbReference type="PDBsum" id="8HVT"/>
<dbReference type="EMDB" id="EMD-22389"/>
<dbReference type="EMDB" id="EMD-30238"/>
<dbReference type="EMDB" id="EMD-30436"/>
<dbReference type="EMDB" id="EMD-30437"/>
<dbReference type="EMDB" id="EMD-30438"/>
<dbReference type="EMDB" id="EMD-35048"/>
<dbReference type="SMR" id="P51798"/>
<dbReference type="BioGRID" id="107600">
    <property type="interactions" value="158"/>
</dbReference>
<dbReference type="ComplexPortal" id="CPX-6321">
    <property type="entry name" value="CLCN7-OSTM1 chloride channel complex"/>
</dbReference>
<dbReference type="FunCoup" id="P51798">
    <property type="interactions" value="1524"/>
</dbReference>
<dbReference type="IntAct" id="P51798">
    <property type="interactions" value="87"/>
</dbReference>
<dbReference type="MINT" id="P51798"/>
<dbReference type="STRING" id="9606.ENSP00000372193"/>
<dbReference type="GuidetoPHARMACOLOGY" id="706"/>
<dbReference type="TCDB" id="2.A.49.3.3">
    <property type="family name" value="the chloride carrier/channel (clc) family"/>
</dbReference>
<dbReference type="iPTMnet" id="P51798"/>
<dbReference type="PhosphoSitePlus" id="P51798"/>
<dbReference type="SwissPalm" id="P51798"/>
<dbReference type="BioMuta" id="CLCN7"/>
<dbReference type="DMDM" id="12644301"/>
<dbReference type="jPOST" id="P51798"/>
<dbReference type="MassIVE" id="P51798"/>
<dbReference type="PaxDb" id="9606-ENSP00000372193"/>
<dbReference type="PeptideAtlas" id="P51798"/>
<dbReference type="ProteomicsDB" id="19628"/>
<dbReference type="ProteomicsDB" id="56398">
    <molecule id="P51798-1"/>
</dbReference>
<dbReference type="Pumba" id="P51798"/>
<dbReference type="Antibodypedia" id="23121">
    <property type="antibodies" value="209 antibodies from 27 providers"/>
</dbReference>
<dbReference type="DNASU" id="1186"/>
<dbReference type="Ensembl" id="ENST00000382745.9">
    <molecule id="P51798-1"/>
    <property type="protein sequence ID" value="ENSP00000372193.4"/>
    <property type="gene ID" value="ENSG00000103249.19"/>
</dbReference>
<dbReference type="GeneID" id="1186"/>
<dbReference type="KEGG" id="hsa:1186"/>
<dbReference type="MANE-Select" id="ENST00000382745.9">
    <property type="protein sequence ID" value="ENSP00000372193.4"/>
    <property type="RefSeq nucleotide sequence ID" value="NM_001287.6"/>
    <property type="RefSeq protein sequence ID" value="NP_001278.1"/>
</dbReference>
<dbReference type="UCSC" id="uc002clv.4">
    <molecule id="P51798-1"/>
    <property type="organism name" value="human"/>
</dbReference>
<dbReference type="AGR" id="HGNC:2025"/>
<dbReference type="CTD" id="1186"/>
<dbReference type="DisGeNET" id="1186"/>
<dbReference type="GeneCards" id="CLCN7"/>
<dbReference type="GeneReviews" id="CLCN7"/>
<dbReference type="HGNC" id="HGNC:2025">
    <property type="gene designation" value="CLCN7"/>
</dbReference>
<dbReference type="HPA" id="ENSG00000103249">
    <property type="expression patterns" value="Low tissue specificity"/>
</dbReference>
<dbReference type="MalaCards" id="CLCN7"/>
<dbReference type="MIM" id="166600">
    <property type="type" value="phenotype"/>
</dbReference>
<dbReference type="MIM" id="602727">
    <property type="type" value="gene"/>
</dbReference>
<dbReference type="MIM" id="611490">
    <property type="type" value="phenotype"/>
</dbReference>
<dbReference type="MIM" id="618541">
    <property type="type" value="phenotype"/>
</dbReference>
<dbReference type="neXtProt" id="NX_P51798"/>
<dbReference type="OpenTargets" id="ENSG00000103249"/>
<dbReference type="Orphanet" id="53">
    <property type="disease" value="Albers-Schoenberg osteopetrosis"/>
</dbReference>
<dbReference type="Orphanet" id="667">
    <property type="disease" value="Autosomal recessive malignant osteopetrosis"/>
</dbReference>
<dbReference type="Orphanet" id="210110">
    <property type="disease" value="Intermediate osteopetrosis"/>
</dbReference>
<dbReference type="PharmGKB" id="PA26552"/>
<dbReference type="VEuPathDB" id="HostDB:ENSG00000103249"/>
<dbReference type="eggNOG" id="KOG0474">
    <property type="taxonomic scope" value="Eukaryota"/>
</dbReference>
<dbReference type="GeneTree" id="ENSGT00940000158458"/>
<dbReference type="HOGENOM" id="CLU_003181_4_1_1"/>
<dbReference type="InParanoid" id="P51798"/>
<dbReference type="OMA" id="KCDHNGF"/>
<dbReference type="OrthoDB" id="428525at2759"/>
<dbReference type="PAN-GO" id="P51798">
    <property type="GO annotations" value="3 GO annotations based on evolutionary models"/>
</dbReference>
<dbReference type="PhylomeDB" id="P51798"/>
<dbReference type="TreeFam" id="TF313867"/>
<dbReference type="PathwayCommons" id="P51798"/>
<dbReference type="Reactome" id="R-HSA-2672351">
    <property type="pathway name" value="Stimuli-sensing channels"/>
</dbReference>
<dbReference type="SignaLink" id="P51798"/>
<dbReference type="SIGNOR" id="P51798"/>
<dbReference type="BioGRID-ORCS" id="1186">
    <property type="hits" value="8 hits in 1157 CRISPR screens"/>
</dbReference>
<dbReference type="ChiTaRS" id="CLCN7">
    <property type="organism name" value="human"/>
</dbReference>
<dbReference type="GeneWiki" id="CLCN7"/>
<dbReference type="GenomeRNAi" id="1186"/>
<dbReference type="Pharos" id="P51798">
    <property type="development level" value="Tchem"/>
</dbReference>
<dbReference type="PRO" id="PR:P51798"/>
<dbReference type="Proteomes" id="UP000005640">
    <property type="component" value="Chromosome 16"/>
</dbReference>
<dbReference type="RNAct" id="P51798">
    <property type="molecule type" value="protein"/>
</dbReference>
<dbReference type="Bgee" id="ENSG00000103249">
    <property type="expression patterns" value="Expressed in metanephros cortex and 203 other cell types or tissues"/>
</dbReference>
<dbReference type="ExpressionAtlas" id="P51798">
    <property type="expression patterns" value="baseline and differential"/>
</dbReference>
<dbReference type="GO" id="GO:0034707">
    <property type="term" value="C:chloride channel complex"/>
    <property type="evidence" value="ECO:0000353"/>
    <property type="project" value="ComplexPortal"/>
</dbReference>
<dbReference type="GO" id="GO:0043231">
    <property type="term" value="C:intracellular membrane-bounded organelle"/>
    <property type="evidence" value="ECO:0000318"/>
    <property type="project" value="GO_Central"/>
</dbReference>
<dbReference type="GO" id="GO:0005765">
    <property type="term" value="C:lysosomal membrane"/>
    <property type="evidence" value="ECO:0000314"/>
    <property type="project" value="ComplexPortal"/>
</dbReference>
<dbReference type="GO" id="GO:0016020">
    <property type="term" value="C:membrane"/>
    <property type="evidence" value="ECO:0007005"/>
    <property type="project" value="UniProtKB"/>
</dbReference>
<dbReference type="GO" id="GO:0005524">
    <property type="term" value="F:ATP binding"/>
    <property type="evidence" value="ECO:0007669"/>
    <property type="project" value="UniProtKB-KW"/>
</dbReference>
<dbReference type="GO" id="GO:0005254">
    <property type="term" value="F:chloride channel activity"/>
    <property type="evidence" value="ECO:0000304"/>
    <property type="project" value="ProtInc"/>
</dbReference>
<dbReference type="GO" id="GO:0015108">
    <property type="term" value="F:chloride transmembrane transporter activity"/>
    <property type="evidence" value="ECO:0000318"/>
    <property type="project" value="GO_Central"/>
</dbReference>
<dbReference type="GO" id="GO:0062158">
    <property type="term" value="F:chloride:proton antiporter activity"/>
    <property type="evidence" value="ECO:0007669"/>
    <property type="project" value="InterPro"/>
</dbReference>
<dbReference type="GO" id="GO:0009268">
    <property type="term" value="P:response to pH"/>
    <property type="evidence" value="ECO:0007669"/>
    <property type="project" value="Ensembl"/>
</dbReference>
<dbReference type="GO" id="GO:0030321">
    <property type="term" value="P:transepithelial chloride transport"/>
    <property type="evidence" value="ECO:0000314"/>
    <property type="project" value="ComplexPortal"/>
</dbReference>
<dbReference type="CDD" id="cd04591">
    <property type="entry name" value="CBS_pair_voltage-gated_CLC_euk_bac"/>
    <property type="match status" value="1"/>
</dbReference>
<dbReference type="CDD" id="cd03685">
    <property type="entry name" value="ClC_6_like"/>
    <property type="match status" value="1"/>
</dbReference>
<dbReference type="FunFam" id="3.10.580.10:FF:000076">
    <property type="entry name" value="Chloride channel protein"/>
    <property type="match status" value="1"/>
</dbReference>
<dbReference type="Gene3D" id="3.10.580.10">
    <property type="entry name" value="CBS-domain"/>
    <property type="match status" value="1"/>
</dbReference>
<dbReference type="Gene3D" id="1.10.3080.10">
    <property type="entry name" value="Clc chloride channel"/>
    <property type="match status" value="1"/>
</dbReference>
<dbReference type="InterPro" id="IPR000644">
    <property type="entry name" value="CBS_dom"/>
</dbReference>
<dbReference type="InterPro" id="IPR046342">
    <property type="entry name" value="CBS_dom_sf"/>
</dbReference>
<dbReference type="InterPro" id="IPR002249">
    <property type="entry name" value="CIC-7"/>
</dbReference>
<dbReference type="InterPro" id="IPR051280">
    <property type="entry name" value="Cl-channel/antiporter"/>
</dbReference>
<dbReference type="InterPro" id="IPR014743">
    <property type="entry name" value="Cl-channel_core"/>
</dbReference>
<dbReference type="InterPro" id="IPR001807">
    <property type="entry name" value="ClC"/>
</dbReference>
<dbReference type="PANTHER" id="PTHR11689">
    <property type="entry name" value="CHLORIDE CHANNEL PROTEIN CLC FAMILY MEMBER"/>
    <property type="match status" value="1"/>
</dbReference>
<dbReference type="PANTHER" id="PTHR11689:SF136">
    <property type="entry name" value="H(+)_CL(-) EXCHANGE TRANSPORTER 7"/>
    <property type="match status" value="1"/>
</dbReference>
<dbReference type="Pfam" id="PF00571">
    <property type="entry name" value="CBS"/>
    <property type="match status" value="1"/>
</dbReference>
<dbReference type="Pfam" id="PF00654">
    <property type="entry name" value="Voltage_CLC"/>
    <property type="match status" value="1"/>
</dbReference>
<dbReference type="PRINTS" id="PR00762">
    <property type="entry name" value="CLCHANNEL"/>
</dbReference>
<dbReference type="PRINTS" id="PR01118">
    <property type="entry name" value="CLCHANNEL7"/>
</dbReference>
<dbReference type="SMART" id="SM00116">
    <property type="entry name" value="CBS"/>
    <property type="match status" value="2"/>
</dbReference>
<dbReference type="SUPFAM" id="SSF54631">
    <property type="entry name" value="CBS-domain pair"/>
    <property type="match status" value="1"/>
</dbReference>
<dbReference type="SUPFAM" id="SSF81340">
    <property type="entry name" value="Clc chloride channel"/>
    <property type="match status" value="1"/>
</dbReference>
<dbReference type="PROSITE" id="PS51371">
    <property type="entry name" value="CBS"/>
    <property type="match status" value="2"/>
</dbReference>
<evidence type="ECO:0000250" key="1"/>
<evidence type="ECO:0000250" key="2">
    <source>
        <dbReference type="UniProtKB" id="O70496"/>
    </source>
</evidence>
<evidence type="ECO:0000250" key="3">
    <source>
        <dbReference type="UniProtKB" id="P35523"/>
    </source>
</evidence>
<evidence type="ECO:0000255" key="4">
    <source>
        <dbReference type="PROSITE-ProRule" id="PRU00703"/>
    </source>
</evidence>
<evidence type="ECO:0000256" key="5">
    <source>
        <dbReference type="SAM" id="MobiDB-lite"/>
    </source>
</evidence>
<evidence type="ECO:0000269" key="6">
    <source>
    </source>
</evidence>
<evidence type="ECO:0000269" key="7">
    <source>
    </source>
</evidence>
<evidence type="ECO:0000269" key="8">
    <source>
    </source>
</evidence>
<evidence type="ECO:0000269" key="9">
    <source>
    </source>
</evidence>
<evidence type="ECO:0000269" key="10">
    <source>
    </source>
</evidence>
<evidence type="ECO:0000269" key="11">
    <source>
    </source>
</evidence>
<evidence type="ECO:0000269" key="12">
    <source>
    </source>
</evidence>
<evidence type="ECO:0000269" key="13">
    <source>
    </source>
</evidence>
<evidence type="ECO:0000269" key="14">
    <source>
    </source>
</evidence>
<evidence type="ECO:0000269" key="15">
    <source>
    </source>
</evidence>
<evidence type="ECO:0000269" key="16">
    <source>
    </source>
</evidence>
<evidence type="ECO:0000269" key="17">
    <source>
    </source>
</evidence>
<evidence type="ECO:0000303" key="18">
    <source>
    </source>
</evidence>
<evidence type="ECO:0000303" key="19">
    <source>
    </source>
</evidence>
<evidence type="ECO:0000305" key="20"/>
<evidence type="ECO:0000312" key="21">
    <source>
        <dbReference type="HGNC" id="HGNC:2025"/>
    </source>
</evidence>
<evidence type="ECO:0007744" key="22">
    <source>
    </source>
</evidence>
<evidence type="ECO:0007744" key="23">
    <source>
    </source>
</evidence>
<evidence type="ECO:0007829" key="24">
    <source>
        <dbReference type="PDB" id="7CQ5"/>
    </source>
</evidence>
<evidence type="ECO:0007829" key="25">
    <source>
        <dbReference type="PDB" id="7JM7"/>
    </source>
</evidence>
<accession>P51798</accession>
<accession>A6NEJ7</accession>
<accession>A8K5T9</accession>
<accession>A8K7X1</accession>
<accession>B3KPN3</accession>
<accession>E9PDB9</accession>
<accession>Q9NYX5</accession>
<gene>
    <name evidence="21" type="primary">CLCN7</name>
</gene>
<comment type="function">
    <text evidence="3 11 14 17">Slowly voltage-gated channel mediating the exchange of chloride ions against protons (PubMed:18449189, PubMed:21527911). Functions as antiporter and contributes to the acidification of the lysosome lumen and may be involved in maintaining lysosomal pH (PubMed:18449189, PubMed:21527911, PubMed:31155284). The CLC channel family contains both chloride channels and proton-coupled anion transporters that exchange chloride or another anion for protons (By similarity). The presence of conserved gating glutamate residues is typical for family members that function as antiporters (By similarity).</text>
</comment>
<comment type="catalytic activity">
    <reaction evidence="19">
        <text>2 chloride(in) + H(+)(out) = 2 chloride(out) + H(+)(in)</text>
        <dbReference type="Rhea" id="RHEA:29567"/>
        <dbReference type="ChEBI" id="CHEBI:15378"/>
        <dbReference type="ChEBI" id="CHEBI:17996"/>
    </reaction>
</comment>
<comment type="subunit">
    <text evidence="14">Chloride channel 7 are heteromers of alpha (CLCN7) and beta (OSTM1) subunits.</text>
</comment>
<comment type="interaction">
    <interactant intactId="EBI-4402346">
        <id>P51798</id>
    </interactant>
    <interactant intactId="EBI-10489564">
        <id>Q6P5T0</id>
        <label>AQP7</label>
    </interactant>
    <organismsDiffer>false</organismsDiffer>
    <experiments>3</experiments>
</comment>
<comment type="interaction">
    <interactant intactId="EBI-4402346">
        <id>P51798</id>
    </interactant>
    <interactant intactId="EBI-6657396">
        <id>P19397</id>
        <label>CD53</label>
    </interactant>
    <organismsDiffer>false</organismsDiffer>
    <experiments>3</experiments>
</comment>
<comment type="interaction">
    <interactant intactId="EBI-4402346">
        <id>P51798</id>
    </interactant>
    <interactant intactId="EBI-11110431">
        <id>Q8TB36</id>
        <label>GDAP1</label>
    </interactant>
    <organismsDiffer>false</organismsDiffer>
    <experiments>3</experiments>
</comment>
<comment type="interaction">
    <interactant intactId="EBI-4402346">
        <id>P51798</id>
    </interactant>
    <interactant intactId="EBI-18908258">
        <id>O00258</id>
        <label>GET1</label>
    </interactant>
    <organismsDiffer>false</organismsDiffer>
    <experiments>3</experiments>
</comment>
<comment type="interaction">
    <interactant intactId="EBI-4402346">
        <id>P51798</id>
    </interactant>
    <interactant intactId="EBI-1955541">
        <id>Q53GS7</id>
        <label>GLE1</label>
    </interactant>
    <organismsDiffer>false</organismsDiffer>
    <experiments>3</experiments>
</comment>
<comment type="interaction">
    <interactant intactId="EBI-4402346">
        <id>P51798</id>
    </interactant>
    <interactant intactId="EBI-17888181">
        <id>Q9UGI6-2</id>
        <label>KCNN3</label>
    </interactant>
    <organismsDiffer>false</organismsDiffer>
    <experiments>3</experiments>
</comment>
<comment type="interaction">
    <interactant intactId="EBI-4402346">
        <id>P51798</id>
    </interactant>
    <interactant intactId="EBI-2820517">
        <id>Q8TAF8</id>
        <label>LHFPL5</label>
    </interactant>
    <organismsDiffer>false</organismsDiffer>
    <experiments>3</experiments>
</comment>
<comment type="interaction">
    <interactant intactId="EBI-4402346">
        <id>P51798</id>
    </interactant>
    <interactant intactId="EBI-10329546">
        <id>Q9Y5Y7</id>
        <label>LYVE1</label>
    </interactant>
    <organismsDiffer>false</organismsDiffer>
    <experiments>3</experiments>
</comment>
<comment type="interaction">
    <interactant intactId="EBI-4402346">
        <id>P51798</id>
    </interactant>
    <interactant intactId="EBI-12807478">
        <id>P35372-10</id>
        <label>OPRM1</label>
    </interactant>
    <organismsDiffer>false</organismsDiffer>
    <experiments>3</experiments>
</comment>
<comment type="interaction">
    <interactant intactId="EBI-4402346">
        <id>P51798</id>
    </interactant>
    <interactant intactId="EBI-11037160">
        <id>Q86WC4</id>
        <label>OSTM1</label>
    </interactant>
    <organismsDiffer>false</organismsDiffer>
    <experiments>5</experiments>
</comment>
<comment type="interaction">
    <interactant intactId="EBI-4402346">
        <id>P51798</id>
    </interactant>
    <interactant intactId="EBI-10314552">
        <id>Q9NVC3</id>
        <label>SLC38A7</label>
    </interactant>
    <organismsDiffer>false</organismsDiffer>
    <experiments>3</experiments>
</comment>
<comment type="interaction">
    <interactant intactId="EBI-4402346">
        <id>P51798</id>
    </interactant>
    <interactant intactId="EBI-3907610">
        <id>Q8N2U9</id>
        <label>SLC66A2</label>
    </interactant>
    <organismsDiffer>false</organismsDiffer>
    <experiments>3</experiments>
</comment>
<comment type="interaction">
    <interactant intactId="EBI-4402346">
        <id>P51798</id>
    </interactant>
    <interactant intactId="EBI-5235340">
        <id>Q7Z699</id>
        <label>SPRED1</label>
    </interactant>
    <organismsDiffer>false</organismsDiffer>
    <experiments>3</experiments>
</comment>
<comment type="interaction">
    <interactant intactId="EBI-4402346">
        <id>P51798</id>
    </interactant>
    <interactant intactId="EBI-12947623">
        <id>Q96MV1</id>
        <label>TLCD4</label>
    </interactant>
    <organismsDiffer>false</organismsDiffer>
    <experiments>3</experiments>
</comment>
<comment type="interaction">
    <interactant intactId="EBI-4402346">
        <id>P51798</id>
    </interactant>
    <interactant intactId="EBI-11724423">
        <id>Q7Z7N9</id>
        <label>TMEM179B</label>
    </interactant>
    <organismsDiffer>false</organismsDiffer>
    <experiments>3</experiments>
</comment>
<comment type="subcellular location">
    <subcellularLocation>
        <location evidence="10 11 14">Lysosome membrane</location>
        <topology evidence="10 11 14">Multi-pass membrane protein</topology>
    </subcellularLocation>
</comment>
<comment type="alternative products">
    <event type="alternative splicing"/>
    <isoform>
        <id>P51798-1</id>
        <name>1</name>
        <sequence type="displayed"/>
    </isoform>
    <isoform>
        <id>P51798-2</id>
        <name>2</name>
        <sequence type="described" ref="VSP_045698"/>
    </isoform>
</comment>
<comment type="tissue specificity">
    <text evidence="17">Brain and kidney.</text>
</comment>
<comment type="disease" evidence="6 7 8 9 13 15 16">
    <disease id="DI-00888">
        <name>Osteopetrosis, autosomal recessive 4</name>
        <acronym>OPTB4</acronym>
        <description>A rare genetic disease characterized by abnormally dense bone, due to defective resorption of immature bone. Osteopetrosis occurs in two forms: a severe autosomal recessive form occurring in utero, infancy, or childhood, and a benign autosomal dominant form occurring in adolescence or adulthood. Recessive osteopetrosis commonly manifests in early infancy with macrocephaly, feeding difficulties, evolving blindness and deafness, bone marrow failure, severe anemia, and hepatosplenomegaly. Deafness and blindness are generally thought to represent effects of pressure on nerves.</description>
        <dbReference type="MIM" id="611490"/>
    </disease>
    <text>The disease is caused by variants affecting the gene represented in this entry.</text>
</comment>
<comment type="disease" evidence="7 8 12 13 15">
    <disease id="DI-00885">
        <name>Osteopetrosis, autosomal dominant 2</name>
        <acronym>OPTA2</acronym>
        <description>A rare genetic disease characterized by abnormally dense bone, due to defective resorption of immature bone. Osteopetrosis occurs in two forms: a severe autosomal recessive form occurring in utero, infancy, or childhood, and a benign autosomal dominant form occurring in adolescence or adulthood. OPTA2 is the most common form of osteopetrosis, occurring in adolescence or adulthood. It is characterized by sclerosis, predominantly involving the spine, the pelvis and the skull base.</description>
        <dbReference type="MIM" id="166600"/>
    </disease>
    <text>The disease is caused by variants affecting the gene represented in this entry.</text>
</comment>
<comment type="disease" evidence="17">
    <disease id="DI-05637">
        <name>Hypopigmentation, organomegaly, and delayed myelination and development</name>
        <acronym>HOD</acronym>
        <description>An autosomal dominant pleiotropic syndrome characterized by skin and hair hypopigmentation, growth and developmental delay, organomegaly including enlarged liver, spleen and kidneys, delayed brain myelination and developmental deficit in motor skills. Skin and liver biopsies show cellular accumulation of large intracellular vacuoles.</description>
        <dbReference type="MIM" id="618541"/>
    </disease>
    <text>The disease is caused by variants affecting the gene represented in this entry.</text>
</comment>
<comment type="similarity">
    <text evidence="20">Belongs to the chloride channel (TC 2.A.49) family. ClC-7/CLCN7 subfamily.</text>
</comment>
<proteinExistence type="evidence at protein level"/>